<feature type="chain" id="PRO_0000155653" description="Putative manganese efflux pump MntP">
    <location>
        <begin position="1"/>
        <end position="183"/>
    </location>
</feature>
<feature type="transmembrane region" description="Helical" evidence="1">
    <location>
        <begin position="3"/>
        <end position="23"/>
    </location>
</feature>
<feature type="transmembrane region" description="Helical" evidence="1">
    <location>
        <begin position="43"/>
        <end position="63"/>
    </location>
</feature>
<feature type="transmembrane region" description="Helical" evidence="1">
    <location>
        <begin position="66"/>
        <end position="86"/>
    </location>
</feature>
<feature type="transmembrane region" description="Helical" evidence="1">
    <location>
        <begin position="107"/>
        <end position="127"/>
    </location>
</feature>
<feature type="transmembrane region" description="Helical" evidence="1">
    <location>
        <begin position="134"/>
        <end position="154"/>
    </location>
</feature>
<feature type="transmembrane region" description="Helical" evidence="1">
    <location>
        <begin position="161"/>
        <end position="181"/>
    </location>
</feature>
<protein>
    <recommendedName>
        <fullName evidence="1">Putative manganese efflux pump MntP</fullName>
    </recommendedName>
</protein>
<reference key="1">
    <citation type="journal article" date="2002" name="J. Bacteriol.">
        <title>Genome sequence and analysis of the oral bacterium Fusobacterium nucleatum strain ATCC 25586.</title>
        <authorList>
            <person name="Kapatral V."/>
            <person name="Anderson I."/>
            <person name="Ivanova N."/>
            <person name="Reznik G."/>
            <person name="Los T."/>
            <person name="Lykidis A."/>
            <person name="Bhattacharyya A."/>
            <person name="Bartman A."/>
            <person name="Gardner W."/>
            <person name="Grechkin G."/>
            <person name="Zhu L."/>
            <person name="Vasieva O."/>
            <person name="Chu L."/>
            <person name="Kogan Y."/>
            <person name="Chaga O."/>
            <person name="Goltsman E."/>
            <person name="Bernal A."/>
            <person name="Larsen N."/>
            <person name="D'Souza M."/>
            <person name="Walunas T."/>
            <person name="Pusch G."/>
            <person name="Haselkorn R."/>
            <person name="Fonstein M."/>
            <person name="Kyrpides N.C."/>
            <person name="Overbeek R."/>
        </authorList>
    </citation>
    <scope>NUCLEOTIDE SEQUENCE [LARGE SCALE GENOMIC DNA]</scope>
    <source>
        <strain>ATCC 25586 / DSM 15643 / BCRC 10681 / CIP 101130 / JCM 8532 / KCTC 2640 / LMG 13131 / VPI 4355</strain>
    </source>
</reference>
<accession>Q8RII2</accession>
<keyword id="KW-0997">Cell inner membrane</keyword>
<keyword id="KW-1003">Cell membrane</keyword>
<keyword id="KW-0406">Ion transport</keyword>
<keyword id="KW-0464">Manganese</keyword>
<keyword id="KW-0472">Membrane</keyword>
<keyword id="KW-1185">Reference proteome</keyword>
<keyword id="KW-0812">Transmembrane</keyword>
<keyword id="KW-1133">Transmembrane helix</keyword>
<keyword id="KW-0813">Transport</keyword>
<comment type="function">
    <text evidence="1">Probably functions as a manganese efflux pump.</text>
</comment>
<comment type="subcellular location">
    <subcellularLocation>
        <location evidence="1">Cell inner membrane</location>
        <topology evidence="1">Multi-pass membrane protein</topology>
    </subcellularLocation>
</comment>
<comment type="similarity">
    <text evidence="1">Belongs to the MntP (TC 9.B.29) family.</text>
</comment>
<gene>
    <name evidence="1" type="primary">mntP</name>
    <name type="ordered locus">FN1615</name>
</gene>
<name>MNTP_FUSNN</name>
<sequence length="183" mass="20215">MSTISVLITALALSMDAMSLSIYQGIASTESQKKQNFLKIVLTFGIFQFAMALVGSLSGILFIHYISLYSKYVSFAIFLFLGLMMLKEALKKEEMEYDEKYLDFKTLIIMGIATSLDALLVGLTFSILPFYQTFLYTVEIGVITAIIAGLGFILGDKFGNILGQKSHFLGAALLIFISINILL</sequence>
<evidence type="ECO:0000255" key="1">
    <source>
        <dbReference type="HAMAP-Rule" id="MF_01521"/>
    </source>
</evidence>
<organism>
    <name type="scientific">Fusobacterium nucleatum subsp. nucleatum (strain ATCC 25586 / DSM 15643 / BCRC 10681 / CIP 101130 / JCM 8532 / KCTC 2640 / LMG 13131 / VPI 4355)</name>
    <dbReference type="NCBI Taxonomy" id="190304"/>
    <lineage>
        <taxon>Bacteria</taxon>
        <taxon>Fusobacteriati</taxon>
        <taxon>Fusobacteriota</taxon>
        <taxon>Fusobacteriia</taxon>
        <taxon>Fusobacteriales</taxon>
        <taxon>Fusobacteriaceae</taxon>
        <taxon>Fusobacterium</taxon>
    </lineage>
</organism>
<proteinExistence type="inferred from homology"/>
<dbReference type="EMBL" id="AE009951">
    <property type="protein sequence ID" value="AAL93730.1"/>
    <property type="molecule type" value="Genomic_DNA"/>
</dbReference>
<dbReference type="RefSeq" id="NP_602431.1">
    <property type="nucleotide sequence ID" value="NC_003454.1"/>
</dbReference>
<dbReference type="RefSeq" id="WP_011015710.1">
    <property type="nucleotide sequence ID" value="NZ_CP028101.1"/>
</dbReference>
<dbReference type="FunCoup" id="Q8RII2">
    <property type="interactions" value="20"/>
</dbReference>
<dbReference type="STRING" id="190304.FN1615"/>
<dbReference type="PaxDb" id="190304-FN1615"/>
<dbReference type="EnsemblBacteria" id="AAL93730">
    <property type="protein sequence ID" value="AAL93730"/>
    <property type="gene ID" value="FN1615"/>
</dbReference>
<dbReference type="GeneID" id="79782554"/>
<dbReference type="KEGG" id="fnu:FN1615"/>
<dbReference type="PATRIC" id="fig|190304.8.peg.107"/>
<dbReference type="eggNOG" id="COG1971">
    <property type="taxonomic scope" value="Bacteria"/>
</dbReference>
<dbReference type="HOGENOM" id="CLU_096410_3_0_0"/>
<dbReference type="InParanoid" id="Q8RII2"/>
<dbReference type="BioCyc" id="FNUC190304:G1FZS-118-MONOMER"/>
<dbReference type="Proteomes" id="UP000002521">
    <property type="component" value="Chromosome"/>
</dbReference>
<dbReference type="GO" id="GO:0005886">
    <property type="term" value="C:plasma membrane"/>
    <property type="evidence" value="ECO:0000318"/>
    <property type="project" value="GO_Central"/>
</dbReference>
<dbReference type="GO" id="GO:0005384">
    <property type="term" value="F:manganese ion transmembrane transporter activity"/>
    <property type="evidence" value="ECO:0000318"/>
    <property type="project" value="GO_Central"/>
</dbReference>
<dbReference type="GO" id="GO:0030026">
    <property type="term" value="P:intracellular manganese ion homeostasis"/>
    <property type="evidence" value="ECO:0000318"/>
    <property type="project" value="GO_Central"/>
</dbReference>
<dbReference type="GO" id="GO:0140048">
    <property type="term" value="P:manganese ion export across plasma membrane"/>
    <property type="evidence" value="ECO:0000318"/>
    <property type="project" value="GO_Central"/>
</dbReference>
<dbReference type="HAMAP" id="MF_01521">
    <property type="entry name" value="MntP_pump"/>
    <property type="match status" value="1"/>
</dbReference>
<dbReference type="InterPro" id="IPR003810">
    <property type="entry name" value="Mntp/YtaF"/>
</dbReference>
<dbReference type="InterPro" id="IPR022929">
    <property type="entry name" value="Put_MntP"/>
</dbReference>
<dbReference type="PANTHER" id="PTHR35529">
    <property type="entry name" value="MANGANESE EFFLUX PUMP MNTP-RELATED"/>
    <property type="match status" value="1"/>
</dbReference>
<dbReference type="PANTHER" id="PTHR35529:SF1">
    <property type="entry name" value="MANGANESE EFFLUX PUMP MNTP-RELATED"/>
    <property type="match status" value="1"/>
</dbReference>
<dbReference type="Pfam" id="PF02659">
    <property type="entry name" value="Mntp"/>
    <property type="match status" value="1"/>
</dbReference>